<feature type="chain" id="PRO_0000243549" description="Glutamate-1-semialdehyde 2,1-aminomutase 2">
    <location>
        <begin position="1"/>
        <end position="429"/>
    </location>
</feature>
<feature type="modified residue" description="N6-(pyridoxal phosphate)lysine" evidence="1">
    <location>
        <position position="268"/>
    </location>
</feature>
<reference key="1">
    <citation type="journal article" date="2006" name="J. Bacteriol.">
        <title>Pathogenomic sequence analysis of Bacillus cereus and Bacillus thuringiensis isolates closely related to Bacillus anthracis.</title>
        <authorList>
            <person name="Han C.S."/>
            <person name="Xie G."/>
            <person name="Challacombe J.F."/>
            <person name="Altherr M.R."/>
            <person name="Bhotika S.S."/>
            <person name="Bruce D."/>
            <person name="Campbell C.S."/>
            <person name="Campbell M.L."/>
            <person name="Chen J."/>
            <person name="Chertkov O."/>
            <person name="Cleland C."/>
            <person name="Dimitrijevic M."/>
            <person name="Doggett N.A."/>
            <person name="Fawcett J.J."/>
            <person name="Glavina T."/>
            <person name="Goodwin L.A."/>
            <person name="Hill K.K."/>
            <person name="Hitchcock P."/>
            <person name="Jackson P.J."/>
            <person name="Keim P."/>
            <person name="Kewalramani A.R."/>
            <person name="Longmire J."/>
            <person name="Lucas S."/>
            <person name="Malfatti S."/>
            <person name="McMurry K."/>
            <person name="Meincke L.J."/>
            <person name="Misra M."/>
            <person name="Moseman B.L."/>
            <person name="Mundt M."/>
            <person name="Munk A.C."/>
            <person name="Okinaka R.T."/>
            <person name="Parson-Quintana B."/>
            <person name="Reilly L.P."/>
            <person name="Richardson P."/>
            <person name="Robinson D.L."/>
            <person name="Rubin E."/>
            <person name="Saunders E."/>
            <person name="Tapia R."/>
            <person name="Tesmer J.G."/>
            <person name="Thayer N."/>
            <person name="Thompson L.S."/>
            <person name="Tice H."/>
            <person name="Ticknor L.O."/>
            <person name="Wills P.L."/>
            <person name="Brettin T.S."/>
            <person name="Gilna P."/>
        </authorList>
    </citation>
    <scope>NUCLEOTIDE SEQUENCE [LARGE SCALE GENOMIC DNA]</scope>
    <source>
        <strain>97-27</strain>
    </source>
</reference>
<proteinExistence type="inferred from homology"/>
<protein>
    <recommendedName>
        <fullName evidence="1">Glutamate-1-semialdehyde 2,1-aminomutase 2</fullName>
        <shortName evidence="1">GSA 2</shortName>
        <ecNumber evidence="1">5.4.3.8</ecNumber>
    </recommendedName>
    <alternativeName>
        <fullName evidence="1">Glutamate-1-semialdehyde aminotransferase 2</fullName>
        <shortName evidence="1">GSA-AT 2</shortName>
    </alternativeName>
</protein>
<organism>
    <name type="scientific">Bacillus thuringiensis subsp. konkukian (strain 97-27)</name>
    <dbReference type="NCBI Taxonomy" id="281309"/>
    <lineage>
        <taxon>Bacteria</taxon>
        <taxon>Bacillati</taxon>
        <taxon>Bacillota</taxon>
        <taxon>Bacilli</taxon>
        <taxon>Bacillales</taxon>
        <taxon>Bacillaceae</taxon>
        <taxon>Bacillus</taxon>
        <taxon>Bacillus cereus group</taxon>
    </lineage>
</organism>
<keyword id="KW-0963">Cytoplasm</keyword>
<keyword id="KW-0413">Isomerase</keyword>
<keyword id="KW-0627">Porphyrin biosynthesis</keyword>
<keyword id="KW-0663">Pyridoxal phosphate</keyword>
<gene>
    <name evidence="1" type="primary">hemL2</name>
    <name type="ordered locus">BT9727_4194</name>
</gene>
<sequence>MRKFDKSIAAFEEAQDLMPGGVNSPVRAFKSVGMNPLFMERGKGSKVYDIDGNEYIDYVLSWGPLIHGHANDRVVEALKAVAERGTSFGAPTEIENKLAKLVIERVPSIEIVRMVNSGTEATMSALRLARGYTGRNKILKFIGCYHGHGDSLLIKAGSGVATLGLPDSPGVPEGVAKNTITVAYNDLESVKYAFEQFGDDIACVIVEPVAGNMGVVPPQPGFLEGLREVTEQNGALLIFDEVMTGFRVAYNCGQGYYGVTPDLTCLGKVIGGGLPVGAYGGKAEIMRQVAPSGPIYQAGTLSGNPLAMAAGYETLVQLTPESYVEFERKAEMLEAGLRKAAEKHGIPHHINRAGSMIGIFFTDEPVINYDAAKSSNLQFFAAYYREMVEQGVFLPPSQFEGLFLSTAHSDADIEATIAAAEIAMSKLKA</sequence>
<name>GSA2_BACHK</name>
<comment type="catalytic activity">
    <reaction evidence="1">
        <text>(S)-4-amino-5-oxopentanoate = 5-aminolevulinate</text>
        <dbReference type="Rhea" id="RHEA:14265"/>
        <dbReference type="ChEBI" id="CHEBI:57501"/>
        <dbReference type="ChEBI" id="CHEBI:356416"/>
        <dbReference type="EC" id="5.4.3.8"/>
    </reaction>
</comment>
<comment type="cofactor">
    <cofactor evidence="1">
        <name>pyridoxal 5'-phosphate</name>
        <dbReference type="ChEBI" id="CHEBI:597326"/>
    </cofactor>
</comment>
<comment type="pathway">
    <text evidence="1">Porphyrin-containing compound metabolism; protoporphyrin-IX biosynthesis; 5-aminolevulinate from L-glutamyl-tRNA(Glu): step 2/2.</text>
</comment>
<comment type="subunit">
    <text evidence="1">Homodimer.</text>
</comment>
<comment type="subcellular location">
    <subcellularLocation>
        <location evidence="1">Cytoplasm</location>
    </subcellularLocation>
</comment>
<comment type="similarity">
    <text evidence="1">Belongs to the class-III pyridoxal-phosphate-dependent aminotransferase family. HemL subfamily.</text>
</comment>
<evidence type="ECO:0000255" key="1">
    <source>
        <dbReference type="HAMAP-Rule" id="MF_00375"/>
    </source>
</evidence>
<dbReference type="EC" id="5.4.3.8" evidence="1"/>
<dbReference type="EMBL" id="AE017355">
    <property type="protein sequence ID" value="AAT60845.1"/>
    <property type="molecule type" value="Genomic_DNA"/>
</dbReference>
<dbReference type="RefSeq" id="YP_038511.1">
    <property type="nucleotide sequence ID" value="NC_005957.1"/>
</dbReference>
<dbReference type="SMR" id="Q6HD65"/>
<dbReference type="KEGG" id="btk:BT9727_4194"/>
<dbReference type="PATRIC" id="fig|281309.8.peg.4472"/>
<dbReference type="HOGENOM" id="CLU_016922_1_5_9"/>
<dbReference type="UniPathway" id="UPA00251">
    <property type="reaction ID" value="UER00317"/>
</dbReference>
<dbReference type="Proteomes" id="UP000001301">
    <property type="component" value="Chromosome"/>
</dbReference>
<dbReference type="GO" id="GO:0005737">
    <property type="term" value="C:cytoplasm"/>
    <property type="evidence" value="ECO:0007669"/>
    <property type="project" value="UniProtKB-SubCell"/>
</dbReference>
<dbReference type="GO" id="GO:0042286">
    <property type="term" value="F:glutamate-1-semialdehyde 2,1-aminomutase activity"/>
    <property type="evidence" value="ECO:0007669"/>
    <property type="project" value="UniProtKB-UniRule"/>
</dbReference>
<dbReference type="GO" id="GO:0030170">
    <property type="term" value="F:pyridoxal phosphate binding"/>
    <property type="evidence" value="ECO:0007669"/>
    <property type="project" value="InterPro"/>
</dbReference>
<dbReference type="GO" id="GO:0008483">
    <property type="term" value="F:transaminase activity"/>
    <property type="evidence" value="ECO:0007669"/>
    <property type="project" value="InterPro"/>
</dbReference>
<dbReference type="GO" id="GO:0006782">
    <property type="term" value="P:protoporphyrinogen IX biosynthetic process"/>
    <property type="evidence" value="ECO:0007669"/>
    <property type="project" value="UniProtKB-UniRule"/>
</dbReference>
<dbReference type="CDD" id="cd00610">
    <property type="entry name" value="OAT_like"/>
    <property type="match status" value="1"/>
</dbReference>
<dbReference type="FunFam" id="3.40.640.10:FF:000021">
    <property type="entry name" value="Glutamate-1-semialdehyde 2,1-aminomutase"/>
    <property type="match status" value="1"/>
</dbReference>
<dbReference type="Gene3D" id="3.90.1150.10">
    <property type="entry name" value="Aspartate Aminotransferase, domain 1"/>
    <property type="match status" value="1"/>
</dbReference>
<dbReference type="Gene3D" id="3.40.640.10">
    <property type="entry name" value="Type I PLP-dependent aspartate aminotransferase-like (Major domain)"/>
    <property type="match status" value="1"/>
</dbReference>
<dbReference type="HAMAP" id="MF_00375">
    <property type="entry name" value="HemL_aminotrans_3"/>
    <property type="match status" value="1"/>
</dbReference>
<dbReference type="InterPro" id="IPR004639">
    <property type="entry name" value="4pyrrol_synth_GluAld_NH2Trfase"/>
</dbReference>
<dbReference type="InterPro" id="IPR005814">
    <property type="entry name" value="Aminotrans_3"/>
</dbReference>
<dbReference type="InterPro" id="IPR049704">
    <property type="entry name" value="Aminotrans_3_PPA_site"/>
</dbReference>
<dbReference type="InterPro" id="IPR015424">
    <property type="entry name" value="PyrdxlP-dep_Trfase"/>
</dbReference>
<dbReference type="InterPro" id="IPR015421">
    <property type="entry name" value="PyrdxlP-dep_Trfase_major"/>
</dbReference>
<dbReference type="InterPro" id="IPR015422">
    <property type="entry name" value="PyrdxlP-dep_Trfase_small"/>
</dbReference>
<dbReference type="NCBIfam" id="TIGR00713">
    <property type="entry name" value="hemL"/>
    <property type="match status" value="1"/>
</dbReference>
<dbReference type="NCBIfam" id="NF000818">
    <property type="entry name" value="PRK00062.1"/>
    <property type="match status" value="1"/>
</dbReference>
<dbReference type="PANTHER" id="PTHR43713">
    <property type="entry name" value="GLUTAMATE-1-SEMIALDEHYDE 2,1-AMINOMUTASE"/>
    <property type="match status" value="1"/>
</dbReference>
<dbReference type="PANTHER" id="PTHR43713:SF3">
    <property type="entry name" value="GLUTAMATE-1-SEMIALDEHYDE 2,1-AMINOMUTASE 1, CHLOROPLASTIC-RELATED"/>
    <property type="match status" value="1"/>
</dbReference>
<dbReference type="Pfam" id="PF00202">
    <property type="entry name" value="Aminotran_3"/>
    <property type="match status" value="1"/>
</dbReference>
<dbReference type="SUPFAM" id="SSF53383">
    <property type="entry name" value="PLP-dependent transferases"/>
    <property type="match status" value="1"/>
</dbReference>
<dbReference type="PROSITE" id="PS00600">
    <property type="entry name" value="AA_TRANSFER_CLASS_3"/>
    <property type="match status" value="1"/>
</dbReference>
<accession>Q6HD65</accession>